<comment type="function">
    <text evidence="1">pH-dependent, voltage-insensitive, background potassium channel protein.</text>
</comment>
<comment type="subunit">
    <text evidence="1">Homodimer. May form heterodimers with other family members.</text>
</comment>
<comment type="subcellular location">
    <subcellularLocation>
        <location evidence="1">Cell membrane</location>
        <topology evidence="1">Multi-pass membrane protein</topology>
    </subcellularLocation>
</comment>
<comment type="similarity">
    <text evidence="3">Belongs to the two pore domain potassium channel (TC 1.A.1.8) family.</text>
</comment>
<reference key="1">
    <citation type="submission" date="2004-09" db="EMBL/GenBank/DDBJ databases">
        <authorList>
            <consortium name="NIH - Xenopus Gene Collection (XGC) project"/>
        </authorList>
    </citation>
    <scope>NUCLEOTIDE SEQUENCE [LARGE SCALE MRNA]</scope>
    <source>
        <tissue>Eye</tissue>
    </source>
</reference>
<organism>
    <name type="scientific">Xenopus laevis</name>
    <name type="common">African clawed frog</name>
    <dbReference type="NCBI Taxonomy" id="8355"/>
    <lineage>
        <taxon>Eukaryota</taxon>
        <taxon>Metazoa</taxon>
        <taxon>Chordata</taxon>
        <taxon>Craniata</taxon>
        <taxon>Vertebrata</taxon>
        <taxon>Euteleostomi</taxon>
        <taxon>Amphibia</taxon>
        <taxon>Batrachia</taxon>
        <taxon>Anura</taxon>
        <taxon>Pipoidea</taxon>
        <taxon>Pipidae</taxon>
        <taxon>Xenopodinae</taxon>
        <taxon>Xenopus</taxon>
        <taxon>Xenopus</taxon>
    </lineage>
</organism>
<protein>
    <recommendedName>
        <fullName>Potassium channel subfamily K member 9</fullName>
    </recommendedName>
</protein>
<keyword id="KW-1003">Cell membrane</keyword>
<keyword id="KW-0325">Glycoprotein</keyword>
<keyword id="KW-0407">Ion channel</keyword>
<keyword id="KW-0406">Ion transport</keyword>
<keyword id="KW-0472">Membrane</keyword>
<keyword id="KW-0630">Potassium</keyword>
<keyword id="KW-0631">Potassium channel</keyword>
<keyword id="KW-0633">Potassium transport</keyword>
<keyword id="KW-1185">Reference proteome</keyword>
<keyword id="KW-0812">Transmembrane</keyword>
<keyword id="KW-1133">Transmembrane helix</keyword>
<keyword id="KW-0813">Transport</keyword>
<feature type="chain" id="PRO_0000101757" description="Potassium channel subfamily K member 9">
    <location>
        <begin position="1"/>
        <end position="374"/>
    </location>
</feature>
<feature type="topological domain" description="Cytoplasmic" evidence="2">
    <location>
        <begin position="1"/>
        <end position="8"/>
    </location>
</feature>
<feature type="transmembrane region" description="Helical" evidence="2">
    <location>
        <begin position="9"/>
        <end position="29"/>
    </location>
</feature>
<feature type="topological domain" description="Extracellular" evidence="2">
    <location>
        <begin position="30"/>
        <end position="88"/>
    </location>
</feature>
<feature type="intramembrane region" description="Pore-forming; Name=Pore-forming 1" evidence="2">
    <location>
        <begin position="89"/>
        <end position="101"/>
    </location>
</feature>
<feature type="topological domain" description="Extracellular" evidence="2">
    <location>
        <begin position="102"/>
        <end position="107"/>
    </location>
</feature>
<feature type="transmembrane region" description="Helical" evidence="2">
    <location>
        <begin position="108"/>
        <end position="128"/>
    </location>
</feature>
<feature type="topological domain" description="Cytoplasmic" evidence="2">
    <location>
        <begin position="129"/>
        <end position="158"/>
    </location>
</feature>
<feature type="transmembrane region" description="Helical" evidence="2">
    <location>
        <begin position="159"/>
        <end position="179"/>
    </location>
</feature>
<feature type="topological domain" description="Extracellular" evidence="2">
    <location>
        <begin position="180"/>
        <end position="194"/>
    </location>
</feature>
<feature type="intramembrane region" description="Pore-forming; Name=Pore-forming 2" evidence="2">
    <location>
        <begin position="195"/>
        <end position="207"/>
    </location>
</feature>
<feature type="topological domain" description="Extracellular" evidence="2">
    <location>
        <begin position="208"/>
        <end position="218"/>
    </location>
</feature>
<feature type="transmembrane region" description="Helical" evidence="2">
    <location>
        <begin position="219"/>
        <end position="239"/>
    </location>
</feature>
<feature type="topological domain" description="Cytoplasmic" evidence="2">
    <location>
        <begin position="240"/>
        <end position="374"/>
    </location>
</feature>
<feature type="glycosylation site" description="N-linked (GlcNAc...) asparagine" evidence="2">
    <location>
        <position position="53"/>
    </location>
</feature>
<evidence type="ECO:0000250" key="1">
    <source>
        <dbReference type="UniProtKB" id="Q9NPC2"/>
    </source>
</evidence>
<evidence type="ECO:0000255" key="2"/>
<evidence type="ECO:0000305" key="3"/>
<name>KCNK9_XENLA</name>
<proteinExistence type="evidence at transcript level"/>
<gene>
    <name type="primary">kcnk9</name>
</gene>
<dbReference type="EMBL" id="BC082937">
    <property type="protein sequence ID" value="AAH82937.1"/>
    <property type="molecule type" value="mRNA"/>
</dbReference>
<dbReference type="RefSeq" id="NP_001088104.1">
    <property type="nucleotide sequence ID" value="NM_001094635.1"/>
</dbReference>
<dbReference type="SMR" id="Q63ZI0"/>
<dbReference type="GlyCosmos" id="Q63ZI0">
    <property type="glycosylation" value="1 site, No reported glycans"/>
</dbReference>
<dbReference type="DNASU" id="494803"/>
<dbReference type="GeneID" id="494803"/>
<dbReference type="KEGG" id="xla:494803"/>
<dbReference type="AGR" id="Xenbase:XB-GENE-6255084"/>
<dbReference type="CTD" id="494803"/>
<dbReference type="Xenbase" id="XB-GENE-6255084">
    <property type="gene designation" value="kcnk9.L"/>
</dbReference>
<dbReference type="OrthoDB" id="297496at2759"/>
<dbReference type="Proteomes" id="UP000186698">
    <property type="component" value="Chromosome 6L"/>
</dbReference>
<dbReference type="Bgee" id="494803">
    <property type="expression patterns" value="Expressed in brain and 3 other cell types or tissues"/>
</dbReference>
<dbReference type="GO" id="GO:0005886">
    <property type="term" value="C:plasma membrane"/>
    <property type="evidence" value="ECO:0000318"/>
    <property type="project" value="GO_Central"/>
</dbReference>
<dbReference type="GO" id="GO:0015271">
    <property type="term" value="F:outward rectifier potassium channel activity"/>
    <property type="evidence" value="ECO:0000318"/>
    <property type="project" value="GO_Central"/>
</dbReference>
<dbReference type="GO" id="GO:0022841">
    <property type="term" value="F:potassium ion leak channel activity"/>
    <property type="evidence" value="ECO:0000318"/>
    <property type="project" value="GO_Central"/>
</dbReference>
<dbReference type="GO" id="GO:1990573">
    <property type="term" value="P:potassium ion import across plasma membrane"/>
    <property type="evidence" value="ECO:0000318"/>
    <property type="project" value="GO_Central"/>
</dbReference>
<dbReference type="GO" id="GO:0030322">
    <property type="term" value="P:stabilization of membrane potential"/>
    <property type="evidence" value="ECO:0007669"/>
    <property type="project" value="TreeGrafter"/>
</dbReference>
<dbReference type="FunFam" id="1.10.287.70:FF:000057">
    <property type="entry name" value="Potassium channel subfamily K member"/>
    <property type="match status" value="1"/>
</dbReference>
<dbReference type="Gene3D" id="1.10.287.70">
    <property type="match status" value="1"/>
</dbReference>
<dbReference type="InterPro" id="IPR003280">
    <property type="entry name" value="2pore_dom_K_chnl"/>
</dbReference>
<dbReference type="InterPro" id="IPR003092">
    <property type="entry name" value="2pore_dom_K_chnl_TASK"/>
</dbReference>
<dbReference type="InterPro" id="IPR013099">
    <property type="entry name" value="K_chnl_dom"/>
</dbReference>
<dbReference type="InterPro" id="IPR005407">
    <property type="entry name" value="KCNK9"/>
</dbReference>
<dbReference type="PANTHER" id="PTHR11003:SF75">
    <property type="entry name" value="POTASSIUM CHANNEL SUBFAMILY K MEMBER 9"/>
    <property type="match status" value="1"/>
</dbReference>
<dbReference type="PANTHER" id="PTHR11003">
    <property type="entry name" value="POTASSIUM CHANNEL, SUBFAMILY K"/>
    <property type="match status" value="1"/>
</dbReference>
<dbReference type="Pfam" id="PF07885">
    <property type="entry name" value="Ion_trans_2"/>
    <property type="match status" value="2"/>
</dbReference>
<dbReference type="PIRSF" id="PIRSF038061">
    <property type="entry name" value="K_channel_subfamily_K_type"/>
    <property type="match status" value="1"/>
</dbReference>
<dbReference type="PRINTS" id="PR01333">
    <property type="entry name" value="2POREKCHANEL"/>
</dbReference>
<dbReference type="PRINTS" id="PR01585">
    <property type="entry name" value="TASK3CHANNEL"/>
</dbReference>
<dbReference type="PRINTS" id="PR01095">
    <property type="entry name" value="TASKCHANNEL"/>
</dbReference>
<dbReference type="SUPFAM" id="SSF81324">
    <property type="entry name" value="Voltage-gated potassium channels"/>
    <property type="match status" value="2"/>
</dbReference>
<sequence>MKRQNVRTLSLIICTFTYLLVGAAVFDALESDYEMREEEKLKAEEIRLKGKYNISSEDYRQLELVIMQSEPHRAGVQWKFAGSFYFAITVITTIGYGHAAPGTDAGKAFCMFYAVLGIPLTLVMFQSLGERMNTFVKYLLKRIKKCCGMHSTDVSMENMVTVGFFSCMGTLCIGAAAFSHYEEWSFFQAYYYCFITLTTIGFGDYVALQKNRALQKKPLYVAFSFMYILVGLTVIGAFLNLVVLRFLTMNSEDERRDAEERASLAGNRNSMIIHIQEDTPHGRQRYKAEVTDLQSVCSCMCYRSHEYTSRMVSHQNSFSSKLNPQYFHSISYKIEEISPSTLKNSLFPSPVSSVSPGLHSFTDKHRLMKRRKSI</sequence>
<accession>Q63ZI0</accession>